<sequence>MRKTKRRPVSVGEMLKVEFLEPMGITSKALAEAMGVHRNTVSNLINGGVLTAPVAIKLAAALGNTPEFWLNIQHAVDLWDTRNRYQEEAKFVKPLFVSLEQSART</sequence>
<reference key="1">
    <citation type="submission" date="2006-04" db="EMBL/GenBank/DDBJ databases">
        <title>Evolution of chromosomal integron cassette arrays in Vibrio cholerae pandemic strains.</title>
        <authorList>
            <person name="Labbate M."/>
            <person name="Boucher Y."/>
            <person name="Joss M.J."/>
            <person name="Michael C."/>
            <person name="Gillings M.R."/>
            <person name="Stokes H.W."/>
        </authorList>
    </citation>
    <scope>NUCLEOTIDE SEQUENCE [GENOMIC DNA]</scope>
    <source>
        <strain>El Tor Inaba V812 / Serotype O1</strain>
    </source>
</reference>
<reference key="2">
    <citation type="journal article" date="2000" name="Nature">
        <title>DNA sequence of both chromosomes of the cholera pathogen Vibrio cholerae.</title>
        <authorList>
            <person name="Heidelberg J.F."/>
            <person name="Eisen J.A."/>
            <person name="Nelson W.C."/>
            <person name="Clayton R.A."/>
            <person name="Gwinn M.L."/>
            <person name="Dodson R.J."/>
            <person name="Haft D.H."/>
            <person name="Hickey E.K."/>
            <person name="Peterson J.D."/>
            <person name="Umayam L.A."/>
            <person name="Gill S.R."/>
            <person name="Nelson K.E."/>
            <person name="Read T.D."/>
            <person name="Tettelin H."/>
            <person name="Richardson D.L."/>
            <person name="Ermolaeva M.D."/>
            <person name="Vamathevan J.J."/>
            <person name="Bass S."/>
            <person name="Qin H."/>
            <person name="Dragoi I."/>
            <person name="Sellers P."/>
            <person name="McDonald L.A."/>
            <person name="Utterback T.R."/>
            <person name="Fleischmann R.D."/>
            <person name="Nierman W.C."/>
            <person name="White O."/>
            <person name="Salzberg S.L."/>
            <person name="Smith H.O."/>
            <person name="Colwell R.R."/>
            <person name="Mekalanos J.J."/>
            <person name="Venter J.C."/>
            <person name="Fraser C.M."/>
        </authorList>
    </citation>
    <scope>NUCLEOTIDE SEQUENCE [LARGE SCALE GENOMIC DNA]</scope>
    <source>
        <strain>ATCC 39315 / El Tor Inaba N16961</strain>
    </source>
</reference>
<reference key="3">
    <citation type="journal article" date="2006" name="Mol. Microbiol.">
        <title>Two higBA loci in the Vibrio cholerae superintegron encode mRNA cleaving enzymes and can stabilize plasmids.</title>
        <authorList>
            <person name="Christensen-Dalsgaard M."/>
            <person name="Gerdes K."/>
        </authorList>
    </citation>
    <scope>FUNCTION</scope>
    <scope>INDUCTION</scope>
    <source>
        <strain>ATCC 39315 / El Tor Inaba N16961</strain>
    </source>
</reference>
<reference key="4">
    <citation type="journal article" date="2007" name="J. Bacteriol.">
        <title>Characterization of a higBA toxin-antitoxin locus in Vibrio cholerae.</title>
        <authorList>
            <person name="Budde P.P."/>
            <person name="Davis B.M."/>
            <person name="Yuan J."/>
            <person name="Waldor M.K."/>
        </authorList>
    </citation>
    <scope>FUNCTION</scope>
    <scope>INDUCTION</scope>
    <scope>INTERACTION WITH HIGB-1</scope>
    <source>
        <strain>ATCC 39315 / El Tor Inaba N16961</strain>
    </source>
</reference>
<proteinExistence type="evidence at protein level"/>
<protein>
    <recommendedName>
        <fullName>Antitoxin HigA-1</fullName>
    </recommendedName>
</protein>
<accession>Q9KMG4</accession>
<organism>
    <name type="scientific">Vibrio cholerae serotype O1 (strain ATCC 39315 / El Tor Inaba N16961)</name>
    <dbReference type="NCBI Taxonomy" id="243277"/>
    <lineage>
        <taxon>Bacteria</taxon>
        <taxon>Pseudomonadati</taxon>
        <taxon>Pseudomonadota</taxon>
        <taxon>Gammaproteobacteria</taxon>
        <taxon>Vibrionales</taxon>
        <taxon>Vibrionaceae</taxon>
        <taxon>Vibrio</taxon>
    </lineage>
</organism>
<comment type="function">
    <text evidence="2 3">Antitoxin component of a type II toxin-antitoxin (TA) system that counteracts the effect of the HigB-1 toxin. Binds to its own promoter and regulates transcription of the higB-1/higA-1 operon.</text>
</comment>
<comment type="induction">
    <text evidence="2 3">Induced by amino acid starvation. Induced by the protein synthesis inhibitors chloramphenicol, kanamycin and to a lesser extent by spectinomycin.</text>
</comment>
<comment type="miscellaneous">
    <text>HigB-1/HigA-1 has been shown to stabilize plasmids very efficiently in E.coli.</text>
</comment>
<gene>
    <name type="primary">higA-1</name>
    <name type="ordered locus">VC_A0392</name>
</gene>
<dbReference type="EMBL" id="DQ513173">
    <property type="protein sequence ID" value="ABF72536.1"/>
    <property type="molecule type" value="Genomic_DNA"/>
</dbReference>
<dbReference type="EMBL" id="AE003853">
    <property type="protein sequence ID" value="AAF96298.1"/>
    <property type="molecule type" value="Genomic_DNA"/>
</dbReference>
<dbReference type="PIR" id="E82467">
    <property type="entry name" value="E82467"/>
</dbReference>
<dbReference type="RefSeq" id="NP_232786.1">
    <property type="nucleotide sequence ID" value="NC_002506.1"/>
</dbReference>
<dbReference type="RefSeq" id="WP_001232701.1">
    <property type="nucleotide sequence ID" value="NZ_LT906615.1"/>
</dbReference>
<dbReference type="SMR" id="Q9KMG4"/>
<dbReference type="STRING" id="243277.VC_A0392"/>
<dbReference type="DNASU" id="2612448"/>
<dbReference type="EnsemblBacteria" id="AAF96298">
    <property type="protein sequence ID" value="AAF96298"/>
    <property type="gene ID" value="VC_A0392"/>
</dbReference>
<dbReference type="KEGG" id="vch:VC_A0392"/>
<dbReference type="PATRIC" id="fig|243277.26.peg.3022"/>
<dbReference type="eggNOG" id="COG3093">
    <property type="taxonomic scope" value="Bacteria"/>
</dbReference>
<dbReference type="HOGENOM" id="CLU_140230_3_2_6"/>
<dbReference type="Proteomes" id="UP000000584">
    <property type="component" value="Chromosome 2"/>
</dbReference>
<dbReference type="GO" id="GO:0003677">
    <property type="term" value="F:DNA binding"/>
    <property type="evidence" value="ECO:0007669"/>
    <property type="project" value="UniProtKB-KW"/>
</dbReference>
<dbReference type="CDD" id="cd00093">
    <property type="entry name" value="HTH_XRE"/>
    <property type="match status" value="1"/>
</dbReference>
<dbReference type="FunFam" id="1.10.260.40:FF:000055">
    <property type="entry name" value="XRE family transcriptional regulator"/>
    <property type="match status" value="1"/>
</dbReference>
<dbReference type="Gene3D" id="1.10.260.40">
    <property type="entry name" value="lambda repressor-like DNA-binding domains"/>
    <property type="match status" value="1"/>
</dbReference>
<dbReference type="InterPro" id="IPR001387">
    <property type="entry name" value="Cro/C1-type_HTH"/>
</dbReference>
<dbReference type="InterPro" id="IPR010982">
    <property type="entry name" value="Lambda_DNA-bd_dom_sf"/>
</dbReference>
<dbReference type="InterPro" id="IPR013430">
    <property type="entry name" value="Toxin_antidote_HigA"/>
</dbReference>
<dbReference type="NCBIfam" id="TIGR02607">
    <property type="entry name" value="antidote_HigA"/>
    <property type="match status" value="1"/>
</dbReference>
<dbReference type="PANTHER" id="PTHR36924">
    <property type="entry name" value="ANTITOXIN HIGA-1"/>
    <property type="match status" value="1"/>
</dbReference>
<dbReference type="PANTHER" id="PTHR36924:SF1">
    <property type="entry name" value="ANTITOXIN HIGA-1"/>
    <property type="match status" value="1"/>
</dbReference>
<dbReference type="Pfam" id="PF01381">
    <property type="entry name" value="HTH_3"/>
    <property type="match status" value="1"/>
</dbReference>
<dbReference type="SMART" id="SM00530">
    <property type="entry name" value="HTH_XRE"/>
    <property type="match status" value="1"/>
</dbReference>
<dbReference type="SUPFAM" id="SSF47413">
    <property type="entry name" value="lambda repressor-like DNA-binding domains"/>
    <property type="match status" value="1"/>
</dbReference>
<dbReference type="PROSITE" id="PS50943">
    <property type="entry name" value="HTH_CROC1"/>
    <property type="match status" value="1"/>
</dbReference>
<name>HIGA1_VIBCH</name>
<evidence type="ECO:0000255" key="1">
    <source>
        <dbReference type="PROSITE-ProRule" id="PRU00257"/>
    </source>
</evidence>
<evidence type="ECO:0000269" key="2">
    <source>
    </source>
</evidence>
<evidence type="ECO:0000269" key="3">
    <source>
    </source>
</evidence>
<keyword id="KW-0238">DNA-binding</keyword>
<keyword id="KW-1185">Reference proteome</keyword>
<keyword id="KW-1277">Toxin-antitoxin system</keyword>
<keyword id="KW-0804">Transcription</keyword>
<keyword id="KW-0805">Transcription regulation</keyword>
<feature type="chain" id="PRO_0000278766" description="Antitoxin HigA-1">
    <location>
        <begin position="1"/>
        <end position="105"/>
    </location>
</feature>
<feature type="domain" description="HTH cro/C1-type" evidence="1">
    <location>
        <begin position="15"/>
        <end position="69"/>
    </location>
</feature>
<feature type="DNA-binding region" description="H-T-H motif" evidence="1">
    <location>
        <begin position="27"/>
        <end position="46"/>
    </location>
</feature>